<keyword id="KW-0002">3D-structure</keyword>
<keyword id="KW-0408">Iron</keyword>
<keyword id="KW-0479">Metal-binding</keyword>
<keyword id="KW-1185">Reference proteome</keyword>
<organism>
    <name type="scientific">Bacillus subtilis (strain 168)</name>
    <dbReference type="NCBI Taxonomy" id="224308"/>
    <lineage>
        <taxon>Bacteria</taxon>
        <taxon>Bacillati</taxon>
        <taxon>Bacillota</taxon>
        <taxon>Bacilli</taxon>
        <taxon>Bacillales</taxon>
        <taxon>Bacillaceae</taxon>
        <taxon>Bacillus</taxon>
    </lineage>
</organism>
<accession>P46327</accession>
<comment type="cofactor">
    <cofactor evidence="1 5">
        <name>Fe(2+)</name>
        <dbReference type="ChEBI" id="CHEBI:29033"/>
    </cofactor>
    <text evidence="1 5">Binds 1 Fe(2+) ion per subunit.</text>
</comment>
<comment type="similarity">
    <text evidence="4">Belongs to the ROX family.</text>
</comment>
<proteinExistence type="evidence at protein level"/>
<protein>
    <recommendedName>
        <fullName>Uncharacterized protein YxbC</fullName>
    </recommendedName>
</protein>
<gene>
    <name type="primary">yxbC</name>
    <name type="synonym">yxaQ</name>
    <name type="ordered locus">BSU39880</name>
    <name type="ORF">VE7D</name>
</gene>
<name>YXBC_BACSU</name>
<sequence>MSAVTESVLESIISPVTMSEFLEEYWPVKPLVARGEVERFTSIPGFEKVRTLENVLAIYNNPVMVVGDAVIEESEGITDRFLVSPAEALEWYEKGAALEFDFTDLFIPQVRRWIEKLKAELRLPAGTSSKAIVYAAKNGGGFKAHFDAYTNLIFQIQGEKTWKLAKNENVSNPMQHYDLSEAPYYPDDLQSYWKGDPPKEDLPDAEIVNLTPGTMLYLPRGLWHSTKSDQATLALNITFGQPAWLDLMLAALRKKLISDNRFRELAVNHQSLHESSKSELNGYLESLIQTLSENAETLTPEQIFQSQDSDFDPYQSTQLVFRQLLTSYKF</sequence>
<feature type="chain" id="PRO_0000050006" description="Uncharacterized protein YxbC">
    <location>
        <begin position="1"/>
        <end position="330"/>
    </location>
</feature>
<feature type="domain" description="JmjC" evidence="2">
    <location>
        <begin position="96"/>
        <end position="256"/>
    </location>
</feature>
<feature type="binding site" evidence="3">
    <location>
        <position position="145"/>
    </location>
    <ligand>
        <name>Fe cation</name>
        <dbReference type="ChEBI" id="CHEBI:24875"/>
    </ligand>
</feature>
<feature type="binding site" evidence="3">
    <location>
        <position position="147"/>
    </location>
    <ligand>
        <name>Fe cation</name>
        <dbReference type="ChEBI" id="CHEBI:24875"/>
    </ligand>
</feature>
<feature type="binding site" evidence="3">
    <location>
        <position position="224"/>
    </location>
    <ligand>
        <name>Fe cation</name>
        <dbReference type="ChEBI" id="CHEBI:24875"/>
    </ligand>
</feature>
<feature type="helix" evidence="6">
    <location>
        <begin position="10"/>
        <end position="13"/>
    </location>
</feature>
<feature type="helix" evidence="6">
    <location>
        <begin position="18"/>
        <end position="24"/>
    </location>
</feature>
<feature type="turn" evidence="6">
    <location>
        <begin position="25"/>
        <end position="28"/>
    </location>
</feature>
<feature type="strand" evidence="6">
    <location>
        <begin position="31"/>
        <end position="33"/>
    </location>
</feature>
<feature type="helix" evidence="6">
    <location>
        <begin position="37"/>
        <end position="42"/>
    </location>
</feature>
<feature type="helix" evidence="6">
    <location>
        <begin position="46"/>
        <end position="49"/>
    </location>
</feature>
<feature type="helix" evidence="6">
    <location>
        <begin position="52"/>
        <end position="58"/>
    </location>
</feature>
<feature type="strand" evidence="6">
    <location>
        <begin position="63"/>
        <end position="67"/>
    </location>
</feature>
<feature type="helix" evidence="6">
    <location>
        <begin position="68"/>
        <end position="73"/>
    </location>
</feature>
<feature type="turn" evidence="6">
    <location>
        <begin position="74"/>
        <end position="76"/>
    </location>
</feature>
<feature type="strand" evidence="6">
    <location>
        <begin position="79"/>
        <end position="83"/>
    </location>
</feature>
<feature type="helix" evidence="6">
    <location>
        <begin position="85"/>
        <end position="93"/>
    </location>
</feature>
<feature type="strand" evidence="6">
    <location>
        <begin position="97"/>
        <end position="100"/>
    </location>
</feature>
<feature type="helix" evidence="6">
    <location>
        <begin position="103"/>
        <end position="105"/>
    </location>
</feature>
<feature type="helix" evidence="6">
    <location>
        <begin position="110"/>
        <end position="120"/>
    </location>
</feature>
<feature type="strand" evidence="6">
    <location>
        <begin position="129"/>
        <end position="136"/>
    </location>
</feature>
<feature type="strand" evidence="6">
    <location>
        <begin position="144"/>
        <end position="146"/>
    </location>
</feature>
<feature type="strand" evidence="6">
    <location>
        <begin position="148"/>
        <end position="158"/>
    </location>
</feature>
<feature type="strand" evidence="6">
    <location>
        <begin position="160"/>
        <end position="165"/>
    </location>
</feature>
<feature type="helix" evidence="6">
    <location>
        <begin position="179"/>
        <end position="181"/>
    </location>
</feature>
<feature type="helix" evidence="6">
    <location>
        <begin position="187"/>
        <end position="190"/>
    </location>
</feature>
<feature type="strand" evidence="6">
    <location>
        <begin position="206"/>
        <end position="210"/>
    </location>
</feature>
<feature type="strand" evidence="6">
    <location>
        <begin position="215"/>
        <end position="218"/>
    </location>
</feature>
<feature type="strand" evidence="6">
    <location>
        <begin position="223"/>
        <end position="230"/>
    </location>
</feature>
<feature type="strand" evidence="6">
    <location>
        <begin position="232"/>
        <end position="239"/>
    </location>
</feature>
<feature type="helix" evidence="6">
    <location>
        <begin position="244"/>
        <end position="256"/>
    </location>
</feature>
<feature type="helix" evidence="6">
    <location>
        <begin position="260"/>
        <end position="263"/>
    </location>
</feature>
<feature type="helix" evidence="6">
    <location>
        <begin position="269"/>
        <end position="271"/>
    </location>
</feature>
<feature type="helix" evidence="6">
    <location>
        <begin position="274"/>
        <end position="296"/>
    </location>
</feature>
<feature type="helix" evidence="6">
    <location>
        <begin position="300"/>
        <end position="304"/>
    </location>
</feature>
<feature type="turn" evidence="6">
    <location>
        <begin position="305"/>
        <end position="308"/>
    </location>
</feature>
<feature type="helix" evidence="6">
    <location>
        <begin position="313"/>
        <end position="324"/>
    </location>
</feature>
<feature type="turn" evidence="6">
    <location>
        <begin position="325"/>
        <end position="327"/>
    </location>
</feature>
<dbReference type="EMBL" id="AB005554">
    <property type="protein sequence ID" value="BAA21597.1"/>
    <property type="molecule type" value="Genomic_DNA"/>
</dbReference>
<dbReference type="EMBL" id="AL009126">
    <property type="protein sequence ID" value="CAB16024.1"/>
    <property type="molecule type" value="Genomic_DNA"/>
</dbReference>
<dbReference type="PIR" id="G70072">
    <property type="entry name" value="G70072"/>
</dbReference>
<dbReference type="RefSeq" id="NP_391867.1">
    <property type="nucleotide sequence ID" value="NC_000964.3"/>
</dbReference>
<dbReference type="RefSeq" id="WP_003243554.1">
    <property type="nucleotide sequence ID" value="NZ_OZ025638.1"/>
</dbReference>
<dbReference type="PDB" id="1VRB">
    <property type="method" value="X-ray"/>
    <property type="resolution" value="2.60 A"/>
    <property type="chains" value="A/B/C/D=1-330"/>
</dbReference>
<dbReference type="PDB" id="7ZCC">
    <property type="method" value="X-ray"/>
    <property type="resolution" value="1.85 A"/>
    <property type="chains" value="A/B/C/D=1-330"/>
</dbReference>
<dbReference type="PDBsum" id="1VRB"/>
<dbReference type="PDBsum" id="7ZCC"/>
<dbReference type="SMR" id="P46327"/>
<dbReference type="FunCoup" id="P46327">
    <property type="interactions" value="176"/>
</dbReference>
<dbReference type="STRING" id="224308.BSU39880"/>
<dbReference type="PaxDb" id="224308-BSU39880"/>
<dbReference type="EnsemblBacteria" id="CAB16024">
    <property type="protein sequence ID" value="CAB16024"/>
    <property type="gene ID" value="BSU_39880"/>
</dbReference>
<dbReference type="GeneID" id="937640"/>
<dbReference type="KEGG" id="bsu:BSU39880"/>
<dbReference type="PATRIC" id="fig|224308.179.peg.4314"/>
<dbReference type="eggNOG" id="COG2850">
    <property type="taxonomic scope" value="Bacteria"/>
</dbReference>
<dbReference type="InParanoid" id="P46327"/>
<dbReference type="OrthoDB" id="9764016at2"/>
<dbReference type="PhylomeDB" id="P46327"/>
<dbReference type="BioCyc" id="BSUB:BSU39880-MONOMER"/>
<dbReference type="EvolutionaryTrace" id="P46327"/>
<dbReference type="Proteomes" id="UP000001570">
    <property type="component" value="Chromosome"/>
</dbReference>
<dbReference type="GO" id="GO:0046872">
    <property type="term" value="F:metal ion binding"/>
    <property type="evidence" value="ECO:0007669"/>
    <property type="project" value="UniProtKB-KW"/>
</dbReference>
<dbReference type="Gene3D" id="6.10.280.40">
    <property type="match status" value="1"/>
</dbReference>
<dbReference type="Gene3D" id="2.60.120.650">
    <property type="entry name" value="Cupin"/>
    <property type="match status" value="1"/>
</dbReference>
<dbReference type="InterPro" id="IPR003347">
    <property type="entry name" value="JmjC_dom"/>
</dbReference>
<dbReference type="InterPro" id="IPR039994">
    <property type="entry name" value="NO66-like"/>
</dbReference>
<dbReference type="PANTHER" id="PTHR13096">
    <property type="entry name" value="MINA53 MYC INDUCED NUCLEAR ANTIGEN"/>
    <property type="match status" value="1"/>
</dbReference>
<dbReference type="PANTHER" id="PTHR13096:SF8">
    <property type="entry name" value="RIBOSOMAL OXYGENASE 1"/>
    <property type="match status" value="1"/>
</dbReference>
<dbReference type="Pfam" id="PF08007">
    <property type="entry name" value="JmjC_2"/>
    <property type="match status" value="1"/>
</dbReference>
<dbReference type="SMART" id="SM00558">
    <property type="entry name" value="JmjC"/>
    <property type="match status" value="1"/>
</dbReference>
<dbReference type="SUPFAM" id="SSF51197">
    <property type="entry name" value="Clavaminate synthase-like"/>
    <property type="match status" value="1"/>
</dbReference>
<dbReference type="PROSITE" id="PS51184">
    <property type="entry name" value="JMJC"/>
    <property type="match status" value="1"/>
</dbReference>
<reference key="1">
    <citation type="journal article" date="1995" name="DNA Res.">
        <title>Cloning and sequencing of a 36-kb region of the Bacillus subtilis genome between the gnt and iol operons.</title>
        <authorList>
            <person name="Yoshida K."/>
            <person name="Seki S."/>
            <person name="Fujimura M."/>
            <person name="Miwa Y."/>
            <person name="Fujita Y."/>
        </authorList>
    </citation>
    <scope>NUCLEOTIDE SEQUENCE [GENOMIC DNA]</scope>
    <source>
        <strain>168 / BGSC1A1</strain>
    </source>
</reference>
<reference key="2">
    <citation type="journal article" date="1997" name="Nature">
        <title>The complete genome sequence of the Gram-positive bacterium Bacillus subtilis.</title>
        <authorList>
            <person name="Kunst F."/>
            <person name="Ogasawara N."/>
            <person name="Moszer I."/>
            <person name="Albertini A.M."/>
            <person name="Alloni G."/>
            <person name="Azevedo V."/>
            <person name="Bertero M.G."/>
            <person name="Bessieres P."/>
            <person name="Bolotin A."/>
            <person name="Borchert S."/>
            <person name="Borriss R."/>
            <person name="Boursier L."/>
            <person name="Brans A."/>
            <person name="Braun M."/>
            <person name="Brignell S.C."/>
            <person name="Bron S."/>
            <person name="Brouillet S."/>
            <person name="Bruschi C.V."/>
            <person name="Caldwell B."/>
            <person name="Capuano V."/>
            <person name="Carter N.M."/>
            <person name="Choi S.-K."/>
            <person name="Codani J.-J."/>
            <person name="Connerton I.F."/>
            <person name="Cummings N.J."/>
            <person name="Daniel R.A."/>
            <person name="Denizot F."/>
            <person name="Devine K.M."/>
            <person name="Duesterhoeft A."/>
            <person name="Ehrlich S.D."/>
            <person name="Emmerson P.T."/>
            <person name="Entian K.-D."/>
            <person name="Errington J."/>
            <person name="Fabret C."/>
            <person name="Ferrari E."/>
            <person name="Foulger D."/>
            <person name="Fritz C."/>
            <person name="Fujita M."/>
            <person name="Fujita Y."/>
            <person name="Fuma S."/>
            <person name="Galizzi A."/>
            <person name="Galleron N."/>
            <person name="Ghim S.-Y."/>
            <person name="Glaser P."/>
            <person name="Goffeau A."/>
            <person name="Golightly E.J."/>
            <person name="Grandi G."/>
            <person name="Guiseppi G."/>
            <person name="Guy B.J."/>
            <person name="Haga K."/>
            <person name="Haiech J."/>
            <person name="Harwood C.R."/>
            <person name="Henaut A."/>
            <person name="Hilbert H."/>
            <person name="Holsappel S."/>
            <person name="Hosono S."/>
            <person name="Hullo M.-F."/>
            <person name="Itaya M."/>
            <person name="Jones L.-M."/>
            <person name="Joris B."/>
            <person name="Karamata D."/>
            <person name="Kasahara Y."/>
            <person name="Klaerr-Blanchard M."/>
            <person name="Klein C."/>
            <person name="Kobayashi Y."/>
            <person name="Koetter P."/>
            <person name="Koningstein G."/>
            <person name="Krogh S."/>
            <person name="Kumano M."/>
            <person name="Kurita K."/>
            <person name="Lapidus A."/>
            <person name="Lardinois S."/>
            <person name="Lauber J."/>
            <person name="Lazarevic V."/>
            <person name="Lee S.-M."/>
            <person name="Levine A."/>
            <person name="Liu H."/>
            <person name="Masuda S."/>
            <person name="Mauel C."/>
            <person name="Medigue C."/>
            <person name="Medina N."/>
            <person name="Mellado R.P."/>
            <person name="Mizuno M."/>
            <person name="Moestl D."/>
            <person name="Nakai S."/>
            <person name="Noback M."/>
            <person name="Noone D."/>
            <person name="O'Reilly M."/>
            <person name="Ogawa K."/>
            <person name="Ogiwara A."/>
            <person name="Oudega B."/>
            <person name="Park S.-H."/>
            <person name="Parro V."/>
            <person name="Pohl T.M."/>
            <person name="Portetelle D."/>
            <person name="Porwollik S."/>
            <person name="Prescott A.M."/>
            <person name="Presecan E."/>
            <person name="Pujic P."/>
            <person name="Purnelle B."/>
            <person name="Rapoport G."/>
            <person name="Rey M."/>
            <person name="Reynolds S."/>
            <person name="Rieger M."/>
            <person name="Rivolta C."/>
            <person name="Rocha E."/>
            <person name="Roche B."/>
            <person name="Rose M."/>
            <person name="Sadaie Y."/>
            <person name="Sato T."/>
            <person name="Scanlan E."/>
            <person name="Schleich S."/>
            <person name="Schroeter R."/>
            <person name="Scoffone F."/>
            <person name="Sekiguchi J."/>
            <person name="Sekowska A."/>
            <person name="Seror S.J."/>
            <person name="Serror P."/>
            <person name="Shin B.-S."/>
            <person name="Soldo B."/>
            <person name="Sorokin A."/>
            <person name="Tacconi E."/>
            <person name="Takagi T."/>
            <person name="Takahashi H."/>
            <person name="Takemaru K."/>
            <person name="Takeuchi M."/>
            <person name="Tamakoshi A."/>
            <person name="Tanaka T."/>
            <person name="Terpstra P."/>
            <person name="Tognoni A."/>
            <person name="Tosato V."/>
            <person name="Uchiyama S."/>
            <person name="Vandenbol M."/>
            <person name="Vannier F."/>
            <person name="Vassarotti A."/>
            <person name="Viari A."/>
            <person name="Wambutt R."/>
            <person name="Wedler E."/>
            <person name="Wedler H."/>
            <person name="Weitzenegger T."/>
            <person name="Winters P."/>
            <person name="Wipat A."/>
            <person name="Yamamoto H."/>
            <person name="Yamane K."/>
            <person name="Yasumoto K."/>
            <person name="Yata K."/>
            <person name="Yoshida K."/>
            <person name="Yoshikawa H.-F."/>
            <person name="Zumstein E."/>
            <person name="Yoshikawa H."/>
            <person name="Danchin A."/>
        </authorList>
    </citation>
    <scope>NUCLEOTIDE SEQUENCE [LARGE SCALE GENOMIC DNA]</scope>
    <source>
        <strain>168</strain>
    </source>
</reference>
<reference key="3">
    <citation type="submission" date="2005-03" db="PDB data bank">
        <title>Crystal structure of putative asparaginyl hydroxylase (2636534) from Bacillus subtilis at 2.60 A resolution.</title>
        <authorList>
            <consortium name="Joint center for structural genomics (JCSG)"/>
        </authorList>
    </citation>
    <scope>X-RAY CRYSTALLOGRAPHY (2.6 ANGSTROMS) IN COMPLEX WITH IRON IONS</scope>
</reference>
<evidence type="ECO:0000250" key="1">
    <source>
        <dbReference type="UniProtKB" id="P27431"/>
    </source>
</evidence>
<evidence type="ECO:0000255" key="2">
    <source>
        <dbReference type="PROSITE-ProRule" id="PRU00538"/>
    </source>
</evidence>
<evidence type="ECO:0000269" key="3">
    <source ref="3"/>
</evidence>
<evidence type="ECO:0000305" key="4"/>
<evidence type="ECO:0000305" key="5">
    <source ref="3"/>
</evidence>
<evidence type="ECO:0007829" key="6">
    <source>
        <dbReference type="PDB" id="7ZCC"/>
    </source>
</evidence>